<evidence type="ECO:0000250" key="1"/>
<evidence type="ECO:0000255" key="2"/>
<evidence type="ECO:0000305" key="3"/>
<comment type="function">
    <text evidence="1">NDH-1 shuttles electrons from NADH, via FMN and iron-sulfur (Fe-S) centers, to quinones in the respiratory chain. The immediate electron acceptor for the enzyme in this species is believed to be ubiquinone. Couples the redox reaction to proton translocation (for every two electrons transferred, four hydrogen ions are translocated across the cytoplasmic membrane), and thus conserves the redox energy in a proton gradient (By similarity).</text>
</comment>
<comment type="catalytic activity">
    <reaction>
        <text>a quinone + NADH + 5 H(+)(in) = a quinol + NAD(+) + 4 H(+)(out)</text>
        <dbReference type="Rhea" id="RHEA:57888"/>
        <dbReference type="ChEBI" id="CHEBI:15378"/>
        <dbReference type="ChEBI" id="CHEBI:24646"/>
        <dbReference type="ChEBI" id="CHEBI:57540"/>
        <dbReference type="ChEBI" id="CHEBI:57945"/>
        <dbReference type="ChEBI" id="CHEBI:132124"/>
    </reaction>
</comment>
<comment type="cofactor">
    <cofactor evidence="3">
        <name>FMN</name>
        <dbReference type="ChEBI" id="CHEBI:58210"/>
    </cofactor>
    <text evidence="3">Binds 1 FMN.</text>
</comment>
<comment type="cofactor">
    <cofactor evidence="3">
        <name>[4Fe-4S] cluster</name>
        <dbReference type="ChEBI" id="CHEBI:49883"/>
    </cofactor>
    <text evidence="3">Binds 1 [4Fe-4S] cluster.</text>
</comment>
<comment type="similarity">
    <text evidence="3">Belongs to the complex I 51 kDa subunit family.</text>
</comment>
<reference key="1">
    <citation type="submission" date="1999-07" db="EMBL/GenBank/DDBJ databases">
        <title>Rhizobium meliloti carries two sets of nuo genes.</title>
        <authorList>
            <person name="Putnoky P."/>
            <person name="Jady B."/>
            <person name="Chellapilla K.P."/>
            <person name="Barta F."/>
            <person name="Kiss E."/>
        </authorList>
    </citation>
    <scope>NUCLEOTIDE SEQUENCE [GENOMIC DNA]</scope>
    <source>
        <strain>41</strain>
    </source>
</reference>
<reference key="2">
    <citation type="journal article" date="2001" name="Proc. Natl. Acad. Sci. U.S.A.">
        <title>Nucleotide sequence and predicted functions of the entire Sinorhizobium meliloti pSymA megaplasmid.</title>
        <authorList>
            <person name="Barnett M.J."/>
            <person name="Fisher R.F."/>
            <person name="Jones T."/>
            <person name="Komp C."/>
            <person name="Abola A.P."/>
            <person name="Barloy-Hubler F."/>
            <person name="Bowser L."/>
            <person name="Capela D."/>
            <person name="Galibert F."/>
            <person name="Gouzy J."/>
            <person name="Gurjal M."/>
            <person name="Hong A."/>
            <person name="Huizar L."/>
            <person name="Hyman R.W."/>
            <person name="Kahn D."/>
            <person name="Kahn M.L."/>
            <person name="Kalman S."/>
            <person name="Keating D.H."/>
            <person name="Palm C."/>
            <person name="Peck M.C."/>
            <person name="Surzycki R."/>
            <person name="Wells D.H."/>
            <person name="Yeh K.-C."/>
            <person name="Davis R.W."/>
            <person name="Federspiel N.A."/>
            <person name="Long S.R."/>
        </authorList>
    </citation>
    <scope>NUCLEOTIDE SEQUENCE [LARGE SCALE GENOMIC DNA]</scope>
    <source>
        <strain>1021</strain>
    </source>
</reference>
<reference key="3">
    <citation type="journal article" date="2001" name="Science">
        <title>The composite genome of the legume symbiont Sinorhizobium meliloti.</title>
        <authorList>
            <person name="Galibert F."/>
            <person name="Finan T.M."/>
            <person name="Long S.R."/>
            <person name="Puehler A."/>
            <person name="Abola P."/>
            <person name="Ampe F."/>
            <person name="Barloy-Hubler F."/>
            <person name="Barnett M.J."/>
            <person name="Becker A."/>
            <person name="Boistard P."/>
            <person name="Bothe G."/>
            <person name="Boutry M."/>
            <person name="Bowser L."/>
            <person name="Buhrmester J."/>
            <person name="Cadieu E."/>
            <person name="Capela D."/>
            <person name="Chain P."/>
            <person name="Cowie A."/>
            <person name="Davis R.W."/>
            <person name="Dreano S."/>
            <person name="Federspiel N.A."/>
            <person name="Fisher R.F."/>
            <person name="Gloux S."/>
            <person name="Godrie T."/>
            <person name="Goffeau A."/>
            <person name="Golding B."/>
            <person name="Gouzy J."/>
            <person name="Gurjal M."/>
            <person name="Hernandez-Lucas I."/>
            <person name="Hong A."/>
            <person name="Huizar L."/>
            <person name="Hyman R.W."/>
            <person name="Jones T."/>
            <person name="Kahn D."/>
            <person name="Kahn M.L."/>
            <person name="Kalman S."/>
            <person name="Keating D.H."/>
            <person name="Kiss E."/>
            <person name="Komp C."/>
            <person name="Lelaure V."/>
            <person name="Masuy D."/>
            <person name="Palm C."/>
            <person name="Peck M.C."/>
            <person name="Pohl T.M."/>
            <person name="Portetelle D."/>
            <person name="Purnelle B."/>
            <person name="Ramsperger U."/>
            <person name="Surzycki R."/>
            <person name="Thebault P."/>
            <person name="Vandenbol M."/>
            <person name="Vorhoelter F.J."/>
            <person name="Weidner S."/>
            <person name="Wells D.H."/>
            <person name="Wong K."/>
            <person name="Yeh K.-C."/>
            <person name="Batut J."/>
        </authorList>
    </citation>
    <scope>NUCLEOTIDE SEQUENCE [LARGE SCALE GENOMIC DNA]</scope>
    <source>
        <strain>1021</strain>
    </source>
</reference>
<proteinExistence type="inferred from homology"/>
<protein>
    <recommendedName>
        <fullName>NADH-quinone oxidoreductase subunit F 2</fullName>
        <ecNumber>7.1.1.-</ecNumber>
    </recommendedName>
    <alternativeName>
        <fullName>NADH dehydrogenase I subunit F 2</fullName>
    </alternativeName>
    <alternativeName>
        <fullName>NDH-1 subunit F 2</fullName>
    </alternativeName>
</protein>
<sequence>MFEPVLLRNVDVPDGHLLSTYEAGGGYRALRKALGEYTPDEIVELVKESNLRGRGGAGFPTGMKWSFVPKAAGKPKYLCCNADEGEPGTFKDRIIMERDPHQLIEGLAVSAYAIGAETAYVYIRGEYVTAIRRMEQAIAEAHENGYLGIGILGSGFNFMVHIHRGAGAYICGEETAMLESLEGKRAQPRLKPPFPAVAGLYASPTVINNVETLACVPHIVMRGSAWFRGIGPDRSPGPKLYCLSGQVRKPGLYELPMGISLRELVEEHAGGPLPGRKVKAVIPGGVSAPVIPEGELEVGMDFDSLTAAGSMLGSAGVVVIDDSTCMVKLATRIIEFFHHESCGKCTPCREGLDWTVKVLRRIEAGEGETGDLEQLEMLCKGIFGNTFCALGDGAAMGLRAALKHFRAEFVAHIEERRCPFH</sequence>
<feature type="chain" id="PRO_0000118577" description="NADH-quinone oxidoreductase subunit F 2">
    <location>
        <begin position="1"/>
        <end position="421"/>
    </location>
</feature>
<feature type="binding site" evidence="1">
    <location>
        <begin position="53"/>
        <end position="62"/>
    </location>
    <ligand>
        <name>NAD(+)</name>
        <dbReference type="ChEBI" id="CHEBI:57540"/>
    </ligand>
</feature>
<feature type="binding site" evidence="1">
    <location>
        <begin position="165"/>
        <end position="212"/>
    </location>
    <ligand>
        <name>FMN</name>
        <dbReference type="ChEBI" id="CHEBI:58210"/>
    </ligand>
</feature>
<feature type="binding site" evidence="2">
    <location>
        <position position="342"/>
    </location>
    <ligand>
        <name>[4Fe-4S] cluster</name>
        <dbReference type="ChEBI" id="CHEBI:49883"/>
    </ligand>
</feature>
<feature type="binding site" evidence="2">
    <location>
        <position position="345"/>
    </location>
    <ligand>
        <name>[4Fe-4S] cluster</name>
        <dbReference type="ChEBI" id="CHEBI:49883"/>
    </ligand>
</feature>
<feature type="binding site" evidence="2">
    <location>
        <position position="348"/>
    </location>
    <ligand>
        <name>[4Fe-4S] cluster</name>
        <dbReference type="ChEBI" id="CHEBI:49883"/>
    </ligand>
</feature>
<feature type="binding site" evidence="2">
    <location>
        <position position="388"/>
    </location>
    <ligand>
        <name>[4Fe-4S] cluster</name>
        <dbReference type="ChEBI" id="CHEBI:49883"/>
    </ligand>
</feature>
<feature type="sequence conflict" description="In Ref. 1; CAB51634." evidence="3" ref="1">
    <original>I</original>
    <variation>V</variation>
    <location>
        <position position="149"/>
    </location>
</feature>
<feature type="sequence conflict" description="In Ref. 1; CAB51634." evidence="3" ref="1">
    <original>G</original>
    <variation>K</variation>
    <location>
        <position position="155"/>
    </location>
</feature>
<feature type="sequence conflict" description="In Ref. 1; CAB51634." evidence="3" ref="1">
    <original>A</original>
    <variation>E</variation>
    <location>
        <position position="407"/>
    </location>
</feature>
<geneLocation type="plasmid">
    <name>pSymA</name>
    <name>megaplasmid 1</name>
</geneLocation>
<accession>P56913</accession>
<name>NUOF2_RHIME</name>
<organism>
    <name type="scientific">Rhizobium meliloti (strain 1021)</name>
    <name type="common">Ensifer meliloti</name>
    <name type="synonym">Sinorhizobium meliloti</name>
    <dbReference type="NCBI Taxonomy" id="266834"/>
    <lineage>
        <taxon>Bacteria</taxon>
        <taxon>Pseudomonadati</taxon>
        <taxon>Pseudomonadota</taxon>
        <taxon>Alphaproteobacteria</taxon>
        <taxon>Hyphomicrobiales</taxon>
        <taxon>Rhizobiaceae</taxon>
        <taxon>Sinorhizobium/Ensifer group</taxon>
        <taxon>Sinorhizobium</taxon>
    </lineage>
</organism>
<keyword id="KW-0004">4Fe-4S</keyword>
<keyword id="KW-0285">Flavoprotein</keyword>
<keyword id="KW-0288">FMN</keyword>
<keyword id="KW-0408">Iron</keyword>
<keyword id="KW-0411">Iron-sulfur</keyword>
<keyword id="KW-0479">Metal-binding</keyword>
<keyword id="KW-0520">NAD</keyword>
<keyword id="KW-0614">Plasmid</keyword>
<keyword id="KW-0874">Quinone</keyword>
<keyword id="KW-1185">Reference proteome</keyword>
<keyword id="KW-1278">Translocase</keyword>
<keyword id="KW-0830">Ubiquinone</keyword>
<gene>
    <name type="primary">nuoF2</name>
    <name type="ordered locus">RA0829</name>
    <name type="ORF">SMa1525</name>
</gene>
<dbReference type="EC" id="7.1.1.-"/>
<dbReference type="EMBL" id="AJ245399">
    <property type="protein sequence ID" value="CAB51634.1"/>
    <property type="molecule type" value="Genomic_DNA"/>
</dbReference>
<dbReference type="EMBL" id="AE006469">
    <property type="protein sequence ID" value="AAK65487.1"/>
    <property type="molecule type" value="Genomic_DNA"/>
</dbReference>
<dbReference type="PIR" id="E95365">
    <property type="entry name" value="E95365"/>
</dbReference>
<dbReference type="RefSeq" id="NP_436075.1">
    <property type="nucleotide sequence ID" value="NC_003037.1"/>
</dbReference>
<dbReference type="SMR" id="P56913"/>
<dbReference type="EnsemblBacteria" id="AAK65487">
    <property type="protein sequence ID" value="AAK65487"/>
    <property type="gene ID" value="SMa1525"/>
</dbReference>
<dbReference type="KEGG" id="sme:SMa1525"/>
<dbReference type="PATRIC" id="fig|266834.11.peg.860"/>
<dbReference type="HOGENOM" id="CLU_014881_0_1_5"/>
<dbReference type="OrthoDB" id="9761899at2"/>
<dbReference type="Proteomes" id="UP000001976">
    <property type="component" value="Plasmid pSymA"/>
</dbReference>
<dbReference type="GO" id="GO:0051539">
    <property type="term" value="F:4 iron, 4 sulfur cluster binding"/>
    <property type="evidence" value="ECO:0007669"/>
    <property type="project" value="UniProtKB-KW"/>
</dbReference>
<dbReference type="GO" id="GO:0010181">
    <property type="term" value="F:FMN binding"/>
    <property type="evidence" value="ECO:0007669"/>
    <property type="project" value="InterPro"/>
</dbReference>
<dbReference type="GO" id="GO:0046872">
    <property type="term" value="F:metal ion binding"/>
    <property type="evidence" value="ECO:0007669"/>
    <property type="project" value="UniProtKB-KW"/>
</dbReference>
<dbReference type="GO" id="GO:0051287">
    <property type="term" value="F:NAD binding"/>
    <property type="evidence" value="ECO:0007669"/>
    <property type="project" value="InterPro"/>
</dbReference>
<dbReference type="GO" id="GO:0008137">
    <property type="term" value="F:NADH dehydrogenase (ubiquinone) activity"/>
    <property type="evidence" value="ECO:0007669"/>
    <property type="project" value="InterPro"/>
</dbReference>
<dbReference type="GO" id="GO:0048038">
    <property type="term" value="F:quinone binding"/>
    <property type="evidence" value="ECO:0007669"/>
    <property type="project" value="UniProtKB-KW"/>
</dbReference>
<dbReference type="FunFam" id="1.20.1440.230:FF:000001">
    <property type="entry name" value="Mitochondrial NADH dehydrogenase flavoprotein 1"/>
    <property type="match status" value="1"/>
</dbReference>
<dbReference type="FunFam" id="3.40.50.11540:FF:000001">
    <property type="entry name" value="NADH dehydrogenase [ubiquinone] flavoprotein 1, mitochondrial"/>
    <property type="match status" value="1"/>
</dbReference>
<dbReference type="FunFam" id="3.10.20.600:FF:000003">
    <property type="entry name" value="NADH-quinone oxidoreductase subunit F"/>
    <property type="match status" value="1"/>
</dbReference>
<dbReference type="Gene3D" id="3.10.20.600">
    <property type="match status" value="1"/>
</dbReference>
<dbReference type="Gene3D" id="6.10.250.1450">
    <property type="match status" value="1"/>
</dbReference>
<dbReference type="Gene3D" id="3.40.50.11540">
    <property type="entry name" value="NADH-ubiquinone oxidoreductase 51kDa subunit"/>
    <property type="match status" value="1"/>
</dbReference>
<dbReference type="Gene3D" id="1.20.1440.230">
    <property type="entry name" value="NADH-ubiquinone oxidoreductase 51kDa subunit, iron-sulphur binding domain"/>
    <property type="match status" value="1"/>
</dbReference>
<dbReference type="InterPro" id="IPR001949">
    <property type="entry name" value="NADH-UbQ_OxRdtase_51kDa_CS"/>
</dbReference>
<dbReference type="InterPro" id="IPR011537">
    <property type="entry name" value="NADH-UbQ_OxRdtase_suF"/>
</dbReference>
<dbReference type="InterPro" id="IPR011538">
    <property type="entry name" value="Nuo51_FMN-bd"/>
</dbReference>
<dbReference type="InterPro" id="IPR037225">
    <property type="entry name" value="Nuo51_FMN-bd_sf"/>
</dbReference>
<dbReference type="InterPro" id="IPR019575">
    <property type="entry name" value="Nuop51_4Fe4S-bd"/>
</dbReference>
<dbReference type="InterPro" id="IPR037207">
    <property type="entry name" value="Nuop51_4Fe4S-bd_sf"/>
</dbReference>
<dbReference type="InterPro" id="IPR019554">
    <property type="entry name" value="Soluble_ligand-bd"/>
</dbReference>
<dbReference type="NCBIfam" id="TIGR01959">
    <property type="entry name" value="nuoF_fam"/>
    <property type="match status" value="1"/>
</dbReference>
<dbReference type="NCBIfam" id="NF010120">
    <property type="entry name" value="PRK13596.1"/>
    <property type="match status" value="1"/>
</dbReference>
<dbReference type="PANTHER" id="PTHR43578">
    <property type="entry name" value="NADH-QUINONE OXIDOREDUCTASE SUBUNIT F"/>
    <property type="match status" value="1"/>
</dbReference>
<dbReference type="PANTHER" id="PTHR43578:SF3">
    <property type="entry name" value="NADH-QUINONE OXIDOREDUCTASE SUBUNIT F"/>
    <property type="match status" value="1"/>
</dbReference>
<dbReference type="Pfam" id="PF01512">
    <property type="entry name" value="Complex1_51K"/>
    <property type="match status" value="1"/>
</dbReference>
<dbReference type="Pfam" id="PF10589">
    <property type="entry name" value="NADH_4Fe-4S"/>
    <property type="match status" value="1"/>
</dbReference>
<dbReference type="Pfam" id="PF10531">
    <property type="entry name" value="SLBB"/>
    <property type="match status" value="1"/>
</dbReference>
<dbReference type="SMART" id="SM00928">
    <property type="entry name" value="NADH_4Fe-4S"/>
    <property type="match status" value="1"/>
</dbReference>
<dbReference type="SUPFAM" id="SSF142019">
    <property type="entry name" value="Nqo1 FMN-binding domain-like"/>
    <property type="match status" value="1"/>
</dbReference>
<dbReference type="SUPFAM" id="SSF142984">
    <property type="entry name" value="Nqo1 middle domain-like"/>
    <property type="match status" value="1"/>
</dbReference>
<dbReference type="SUPFAM" id="SSF140490">
    <property type="entry name" value="Nqo1C-terminal domain-like"/>
    <property type="match status" value="1"/>
</dbReference>
<dbReference type="PROSITE" id="PS00644">
    <property type="entry name" value="COMPLEX1_51K_1"/>
    <property type="match status" value="1"/>
</dbReference>
<dbReference type="PROSITE" id="PS00645">
    <property type="entry name" value="COMPLEX1_51K_2"/>
    <property type="match status" value="1"/>
</dbReference>